<protein>
    <recommendedName>
        <fullName evidence="1">Small ribosomal subunit protein uS14</fullName>
    </recommendedName>
    <alternativeName>
        <fullName evidence="2">30S ribosomal protein S14</fullName>
    </alternativeName>
</protein>
<name>RS14_RALPJ</name>
<keyword id="KW-0687">Ribonucleoprotein</keyword>
<keyword id="KW-0689">Ribosomal protein</keyword>
<keyword id="KW-0694">RNA-binding</keyword>
<keyword id="KW-0699">rRNA-binding</keyword>
<organism>
    <name type="scientific">Ralstonia pickettii (strain 12J)</name>
    <dbReference type="NCBI Taxonomy" id="402626"/>
    <lineage>
        <taxon>Bacteria</taxon>
        <taxon>Pseudomonadati</taxon>
        <taxon>Pseudomonadota</taxon>
        <taxon>Betaproteobacteria</taxon>
        <taxon>Burkholderiales</taxon>
        <taxon>Burkholderiaceae</taxon>
        <taxon>Ralstonia</taxon>
    </lineage>
</organism>
<evidence type="ECO:0000255" key="1">
    <source>
        <dbReference type="HAMAP-Rule" id="MF_00537"/>
    </source>
</evidence>
<evidence type="ECO:0000305" key="2"/>
<comment type="function">
    <text evidence="1">Binds 16S rRNA, required for the assembly of 30S particles and may also be responsible for determining the conformation of the 16S rRNA at the A site.</text>
</comment>
<comment type="subunit">
    <text evidence="1">Part of the 30S ribosomal subunit. Contacts proteins S3 and S10.</text>
</comment>
<comment type="similarity">
    <text evidence="1">Belongs to the universal ribosomal protein uS14 family.</text>
</comment>
<proteinExistence type="inferred from homology"/>
<accession>B2UEK6</accession>
<feature type="chain" id="PRO_1000128531" description="Small ribosomal subunit protein uS14">
    <location>
        <begin position="1"/>
        <end position="101"/>
    </location>
</feature>
<sequence>MAKLSLIEREKKRAKLVAKYAEKRAALEAIVADQSKSEEERYEARLKLQALPRNANPTRQRNRCSITGRPRGTFRKFGLARNKLREIAFKGEIPGLTKASW</sequence>
<reference key="1">
    <citation type="submission" date="2008-05" db="EMBL/GenBank/DDBJ databases">
        <title>Complete sequence of chromosome 1 of Ralstonia pickettii 12J.</title>
        <authorList>
            <person name="Lucas S."/>
            <person name="Copeland A."/>
            <person name="Lapidus A."/>
            <person name="Glavina del Rio T."/>
            <person name="Dalin E."/>
            <person name="Tice H."/>
            <person name="Bruce D."/>
            <person name="Goodwin L."/>
            <person name="Pitluck S."/>
            <person name="Meincke L."/>
            <person name="Brettin T."/>
            <person name="Detter J.C."/>
            <person name="Han C."/>
            <person name="Kuske C.R."/>
            <person name="Schmutz J."/>
            <person name="Larimer F."/>
            <person name="Land M."/>
            <person name="Hauser L."/>
            <person name="Kyrpides N."/>
            <person name="Mikhailova N."/>
            <person name="Marsh T."/>
            <person name="Richardson P."/>
        </authorList>
    </citation>
    <scope>NUCLEOTIDE SEQUENCE [LARGE SCALE GENOMIC DNA]</scope>
    <source>
        <strain>12J</strain>
    </source>
</reference>
<dbReference type="EMBL" id="CP001068">
    <property type="protein sequence ID" value="ACD28406.1"/>
    <property type="molecule type" value="Genomic_DNA"/>
</dbReference>
<dbReference type="SMR" id="B2UEK6"/>
<dbReference type="STRING" id="402626.Rpic_3284"/>
<dbReference type="KEGG" id="rpi:Rpic_3284"/>
<dbReference type="eggNOG" id="COG0199">
    <property type="taxonomic scope" value="Bacteria"/>
</dbReference>
<dbReference type="HOGENOM" id="CLU_139869_0_1_4"/>
<dbReference type="GO" id="GO:0005737">
    <property type="term" value="C:cytoplasm"/>
    <property type="evidence" value="ECO:0007669"/>
    <property type="project" value="UniProtKB-ARBA"/>
</dbReference>
<dbReference type="GO" id="GO:0015935">
    <property type="term" value="C:small ribosomal subunit"/>
    <property type="evidence" value="ECO:0007669"/>
    <property type="project" value="TreeGrafter"/>
</dbReference>
<dbReference type="GO" id="GO:0019843">
    <property type="term" value="F:rRNA binding"/>
    <property type="evidence" value="ECO:0007669"/>
    <property type="project" value="UniProtKB-UniRule"/>
</dbReference>
<dbReference type="GO" id="GO:0003735">
    <property type="term" value="F:structural constituent of ribosome"/>
    <property type="evidence" value="ECO:0007669"/>
    <property type="project" value="InterPro"/>
</dbReference>
<dbReference type="GO" id="GO:0006412">
    <property type="term" value="P:translation"/>
    <property type="evidence" value="ECO:0007669"/>
    <property type="project" value="UniProtKB-UniRule"/>
</dbReference>
<dbReference type="FunFam" id="1.10.287.1480:FF:000001">
    <property type="entry name" value="30S ribosomal protein S14"/>
    <property type="match status" value="1"/>
</dbReference>
<dbReference type="Gene3D" id="1.10.287.1480">
    <property type="match status" value="1"/>
</dbReference>
<dbReference type="HAMAP" id="MF_00537">
    <property type="entry name" value="Ribosomal_uS14_1"/>
    <property type="match status" value="1"/>
</dbReference>
<dbReference type="InterPro" id="IPR001209">
    <property type="entry name" value="Ribosomal_uS14"/>
</dbReference>
<dbReference type="InterPro" id="IPR023036">
    <property type="entry name" value="Ribosomal_uS14_bac/plastid"/>
</dbReference>
<dbReference type="NCBIfam" id="NF006477">
    <property type="entry name" value="PRK08881.1"/>
    <property type="match status" value="1"/>
</dbReference>
<dbReference type="PANTHER" id="PTHR19836">
    <property type="entry name" value="30S RIBOSOMAL PROTEIN S14"/>
    <property type="match status" value="1"/>
</dbReference>
<dbReference type="PANTHER" id="PTHR19836:SF19">
    <property type="entry name" value="SMALL RIBOSOMAL SUBUNIT PROTEIN US14M"/>
    <property type="match status" value="1"/>
</dbReference>
<dbReference type="Pfam" id="PF00253">
    <property type="entry name" value="Ribosomal_S14"/>
    <property type="match status" value="1"/>
</dbReference>
<dbReference type="SUPFAM" id="SSF57716">
    <property type="entry name" value="Glucocorticoid receptor-like (DNA-binding domain)"/>
    <property type="match status" value="1"/>
</dbReference>
<gene>
    <name evidence="1" type="primary">rpsN</name>
    <name type="ordered locus">Rpic_3284</name>
</gene>